<proteinExistence type="evidence at protein level"/>
<comment type="function">
    <text evidence="3 4 15">Required for the use of ethanolamide (EA) as carbon, but not nitrogen, source (Probable). Involved in acetate metabolism during growth on EA, when expressed independently of the eut operon it can restore growth to a double pta-acs deletion mutant (PubMed:14996820). Required for acetate excretion during growth on EA (PubMed:16272400).</text>
</comment>
<comment type="function">
    <text evidence="8 9">Expression of the eut operon allows this bacteria to use ethanolamine (EA) as a carbon, nitrogen and energy source. It relies on cobalamin (vitamin B12) both as a cofactor for the ethanolamine ammonia-lyase (EAL) activity and to induce the operon (PubMed:3045078). EA enhances bacterial survival in macrophages in a concentration-dependent manner, suggesting it is an important nutrient during infection (PubMed:29531136).</text>
</comment>
<comment type="catalytic activity">
    <reaction evidence="3">
        <text>acetyl-CoA + phosphate = acetyl phosphate + CoA</text>
        <dbReference type="Rhea" id="RHEA:19521"/>
        <dbReference type="ChEBI" id="CHEBI:22191"/>
        <dbReference type="ChEBI" id="CHEBI:43474"/>
        <dbReference type="ChEBI" id="CHEBI:57287"/>
        <dbReference type="ChEBI" id="CHEBI:57288"/>
        <dbReference type="EC" id="2.3.1.8"/>
    </reaction>
</comment>
<comment type="biophysicochemical properties">
    <kinetics>
        <KM evidence="3">46 uM for CoA</KM>
        <KM evidence="3">129 uM for acetyl phosphate</KM>
        <text evidence="3">kcat is 1927 sec(-1).</text>
    </kinetics>
    <phDependence>
        <text evidence="3">Optimum pH is 7.2.</text>
    </phDependence>
</comment>
<comment type="pathway">
    <text evidence="9">Amine and polyamine degradation; ethanolamine degradation.</text>
</comment>
<comment type="subunit">
    <text evidence="1">Homodimer.</text>
</comment>
<comment type="subcellular location">
    <subcellularLocation>
        <location evidence="14">Bacterial microcompartment</location>
    </subcellularLocation>
</comment>
<comment type="induction">
    <text evidence="9">Part of the 17-gene eut operon transcribed from a single promoter, induced by ethanolamine and adenosylcobalamin (AdoCbl, vitamin B12).</text>
</comment>
<comment type="disruption phenotype">
    <text evidence="2 4 5 6 7">Can use ethanolamine (EA) as a nitrogen source but not as a carbon source (PubMed:23585538, PubMed:2656649). Not required for aerobic growth on EA supplemented with cobalamin (vitamin B12); deletions and mutations in this gene probably have polar effects on downstream gene expression. A double eutD-eutM and a quadruple eutP-eutQ-eutT-eutD deletion are not required for growth in the above conditions (PubMed:10464203). Somewhat reduced growth on EA, no excretion of acetate from cells. Reduced growth is due to residual nutrients from rich medium (PubMed:16272400, PubMed:23585538). A non-polar deletion mutant does not grow on EA between pH 5.5 and pH 8.5, releases slightly increased amounts of acetaldehyde on EA plus vitamin B12 (PubMed:16585748).</text>
</comment>
<comment type="similarity">
    <text evidence="13">Belongs to the phosphate acetyltransferase and butyryltransferase family.</text>
</comment>
<sequence>MIIERARELAVRAPARVVFPDALDERVLKAAHYLQQYGLARPVLVASPFALRQFALSHRMAMDGIQVIDPHSNLSMRQRFAQRWLARAGEKTPPDAVEKLSDPLMFAAAMVSAGEADVCIAGNLSSTANVLRAGLRVIGLQPGCKTLSSIFLMLPQYAGPALGFADCSVVPQPTAAQLADIALASADTWRAITGEEPRVAMLSFSSNGSARHPNVANVQQATELVRERAPQLLVDGELQFDAAFVPEVAAQKAPDSPLQGRANVMIFPSLEAGNIGYKITQRLGGYRAVGPLIQGLAAPLHDLSRGCSVQEIIELALVAAVPRQADVSRERSLHTLVE</sequence>
<dbReference type="EC" id="2.3.1.8" evidence="3"/>
<dbReference type="EMBL" id="AF093749">
    <property type="protein sequence ID" value="AAC78115.1"/>
    <property type="molecule type" value="Genomic_DNA"/>
</dbReference>
<dbReference type="EMBL" id="AE006468">
    <property type="protein sequence ID" value="AAL21360.1"/>
    <property type="molecule type" value="Genomic_DNA"/>
</dbReference>
<dbReference type="EMBL" id="U18560">
    <property type="protein sequence ID" value="AAA80206.1"/>
    <property type="molecule type" value="Genomic_DNA"/>
</dbReference>
<dbReference type="RefSeq" id="NP_461401.1">
    <property type="nucleotide sequence ID" value="NC_003197.2"/>
</dbReference>
<dbReference type="SMR" id="P41790"/>
<dbReference type="STRING" id="99287.STM2466"/>
<dbReference type="PaxDb" id="99287-STM2466"/>
<dbReference type="GeneID" id="1253988"/>
<dbReference type="KEGG" id="stm:STM2466"/>
<dbReference type="PATRIC" id="fig|99287.12.peg.2604"/>
<dbReference type="HOGENOM" id="CLU_019723_0_1_6"/>
<dbReference type="OMA" id="CEYGENG"/>
<dbReference type="PhylomeDB" id="P41790"/>
<dbReference type="BioCyc" id="SENT99287:STM2466-MONOMER"/>
<dbReference type="BRENDA" id="2.3.1.8">
    <property type="organism ID" value="2169"/>
</dbReference>
<dbReference type="UniPathway" id="UPA00560"/>
<dbReference type="Proteomes" id="UP000001014">
    <property type="component" value="Chromosome"/>
</dbReference>
<dbReference type="GO" id="GO:0031469">
    <property type="term" value="C:bacterial microcompartment"/>
    <property type="evidence" value="ECO:0007669"/>
    <property type="project" value="UniProtKB-SubCell"/>
</dbReference>
<dbReference type="GO" id="GO:0008959">
    <property type="term" value="F:phosphate acetyltransferase activity"/>
    <property type="evidence" value="ECO:0007669"/>
    <property type="project" value="UniProtKB-EC"/>
</dbReference>
<dbReference type="GO" id="GO:0046336">
    <property type="term" value="P:ethanolamine catabolic process"/>
    <property type="evidence" value="ECO:0007669"/>
    <property type="project" value="UniProtKB-UniPathway"/>
</dbReference>
<dbReference type="GO" id="GO:0006091">
    <property type="term" value="P:generation of precursor metabolites and energy"/>
    <property type="evidence" value="ECO:0000304"/>
    <property type="project" value="UniProtKB"/>
</dbReference>
<dbReference type="FunFam" id="3.40.50.10750:FF:000001">
    <property type="entry name" value="Phosphate acetyltransferase"/>
    <property type="match status" value="1"/>
</dbReference>
<dbReference type="Gene3D" id="3.40.50.10950">
    <property type="match status" value="1"/>
</dbReference>
<dbReference type="Gene3D" id="3.40.50.10750">
    <property type="entry name" value="Isocitrate/Isopropylmalate dehydrogenase-like"/>
    <property type="match status" value="1"/>
</dbReference>
<dbReference type="InterPro" id="IPR012147">
    <property type="entry name" value="P_Ac_Bu_trans"/>
</dbReference>
<dbReference type="InterPro" id="IPR004614">
    <property type="entry name" value="P_AcTrfase"/>
</dbReference>
<dbReference type="InterPro" id="IPR042113">
    <property type="entry name" value="P_AcTrfase_dom1"/>
</dbReference>
<dbReference type="InterPro" id="IPR042112">
    <property type="entry name" value="P_AcTrfase_dom2"/>
</dbReference>
<dbReference type="InterPro" id="IPR050500">
    <property type="entry name" value="Phos_Acetyltrans/Butyryltrans"/>
</dbReference>
<dbReference type="InterPro" id="IPR002505">
    <property type="entry name" value="PTA_PTB"/>
</dbReference>
<dbReference type="NCBIfam" id="NF007233">
    <property type="entry name" value="PRK09653.1"/>
    <property type="match status" value="1"/>
</dbReference>
<dbReference type="NCBIfam" id="TIGR00651">
    <property type="entry name" value="pta"/>
    <property type="match status" value="1"/>
</dbReference>
<dbReference type="PANTHER" id="PTHR43356">
    <property type="entry name" value="PHOSPHATE ACETYLTRANSFERASE"/>
    <property type="match status" value="1"/>
</dbReference>
<dbReference type="PANTHER" id="PTHR43356:SF1">
    <property type="entry name" value="PHOSPHATE ACETYLTRANSFERASE EUTD"/>
    <property type="match status" value="1"/>
</dbReference>
<dbReference type="Pfam" id="PF01515">
    <property type="entry name" value="PTA_PTB"/>
    <property type="match status" value="1"/>
</dbReference>
<dbReference type="PIRSF" id="PIRSF000428">
    <property type="entry name" value="P_Ac_trans"/>
    <property type="match status" value="1"/>
</dbReference>
<dbReference type="SUPFAM" id="SSF53659">
    <property type="entry name" value="Isocitrate/Isopropylmalate dehydrogenase-like"/>
    <property type="match status" value="1"/>
</dbReference>
<evidence type="ECO:0000250" key="1">
    <source>
        <dbReference type="UniProtKB" id="P77218"/>
    </source>
</evidence>
<evidence type="ECO:0000269" key="2">
    <source>
    </source>
</evidence>
<evidence type="ECO:0000269" key="3">
    <source>
    </source>
</evidence>
<evidence type="ECO:0000269" key="4">
    <source>
    </source>
</evidence>
<evidence type="ECO:0000269" key="5">
    <source>
    </source>
</evidence>
<evidence type="ECO:0000269" key="6">
    <source>
    </source>
</evidence>
<evidence type="ECO:0000269" key="7">
    <source>
    </source>
</evidence>
<evidence type="ECO:0000269" key="8">
    <source>
    </source>
</evidence>
<evidence type="ECO:0000269" key="9">
    <source>
    </source>
</evidence>
<evidence type="ECO:0000303" key="10">
    <source>
    </source>
</evidence>
<evidence type="ECO:0000303" key="11">
    <source>
    </source>
</evidence>
<evidence type="ECO:0000303" key="12">
    <source>
    </source>
</evidence>
<evidence type="ECO:0000305" key="13"/>
<evidence type="ECO:0000305" key="14">
    <source>
    </source>
</evidence>
<evidence type="ECO:0000305" key="15">
    <source>
    </source>
</evidence>
<name>EUTD_SALTY</name>
<protein>
    <recommendedName>
        <fullName>Phosphate acetyltransferase EutD</fullName>
        <ecNumber evidence="3">2.3.1.8</ecNumber>
    </recommendedName>
    <alternativeName>
        <fullName>Ethanolamine utilization protein EutD</fullName>
    </alternativeName>
    <alternativeName>
        <fullName evidence="10">Phosphotransacetylase EutD</fullName>
        <shortName>PATC EutD</shortName>
    </alternativeName>
</protein>
<feature type="chain" id="PRO_0000179156" description="Phosphate acetyltransferase EutD">
    <location>
        <begin position="1"/>
        <end position="338"/>
    </location>
</feature>
<feature type="sequence conflict" description="In Ref. 3; AAA80206." evidence="13" ref="3">
    <original>AVE</original>
    <variation>GID</variation>
    <location>
        <begin position="96"/>
        <end position="98"/>
    </location>
</feature>
<accession>P41790</accession>
<keyword id="KW-0012">Acyltransferase</keyword>
<keyword id="KW-1283">Bacterial microcompartment</keyword>
<keyword id="KW-1185">Reference proteome</keyword>
<keyword id="KW-0808">Transferase</keyword>
<keyword id="KW-0843">Virulence</keyword>
<organism>
    <name type="scientific">Salmonella typhimurium (strain LT2 / SGSC1412 / ATCC 700720)</name>
    <dbReference type="NCBI Taxonomy" id="99287"/>
    <lineage>
        <taxon>Bacteria</taxon>
        <taxon>Pseudomonadati</taxon>
        <taxon>Pseudomonadota</taxon>
        <taxon>Gammaproteobacteria</taxon>
        <taxon>Enterobacterales</taxon>
        <taxon>Enterobacteriaceae</taxon>
        <taxon>Salmonella</taxon>
    </lineage>
</organism>
<gene>
    <name evidence="11" type="primary">eutD</name>
    <name evidence="12" type="synonym">eutI</name>
    <name type="ordered locus">STM2466</name>
</gene>
<reference key="1">
    <citation type="journal article" date="1999" name="J. Bacteriol.">
        <title>The 17-gene ethanolamine (eut) operon of Salmonella typhimurium encodes five homologues of carboxysome shell proteins.</title>
        <authorList>
            <person name="Kofoid E.C."/>
            <person name="Rappleye C.A."/>
            <person name="Stojiljkovic I."/>
            <person name="Roth J.R."/>
        </authorList>
    </citation>
    <scope>NUCLEOTIDE SEQUENCE [GENOMIC DNA]</scope>
    <scope>DISRUPTION PHENOTYPE</scope>
    <source>
        <strain>LT2</strain>
    </source>
</reference>
<reference key="2">
    <citation type="journal article" date="2001" name="Nature">
        <title>Complete genome sequence of Salmonella enterica serovar Typhimurium LT2.</title>
        <authorList>
            <person name="McClelland M."/>
            <person name="Sanderson K.E."/>
            <person name="Spieth J."/>
            <person name="Clifton S.W."/>
            <person name="Latreille P."/>
            <person name="Courtney L."/>
            <person name="Porwollik S."/>
            <person name="Ali J."/>
            <person name="Dante M."/>
            <person name="Du F."/>
            <person name="Hou S."/>
            <person name="Layman D."/>
            <person name="Leonard S."/>
            <person name="Nguyen C."/>
            <person name="Scott K."/>
            <person name="Holmes A."/>
            <person name="Grewal N."/>
            <person name="Mulvaney E."/>
            <person name="Ryan E."/>
            <person name="Sun H."/>
            <person name="Florea L."/>
            <person name="Miller W."/>
            <person name="Stoneking T."/>
            <person name="Nhan M."/>
            <person name="Waterston R."/>
            <person name="Wilson R.K."/>
        </authorList>
    </citation>
    <scope>NUCLEOTIDE SEQUENCE [LARGE SCALE GENOMIC DNA]</scope>
    <source>
        <strain>LT2 / SGSC1412 / ATCC 700720</strain>
    </source>
</reference>
<reference key="3">
    <citation type="journal article" date="1995" name="J. Bacteriol.">
        <title>Ethanolamine utilization in Salmonella typhimurium: nucleotide sequence, protein expression, and mutational analysis of the cchA cchB eutE eutJ eutG eutH gene cluster.</title>
        <authorList>
            <person name="Stojiljkovic I."/>
            <person name="Baeumler A.J."/>
            <person name="Heffron F."/>
        </authorList>
    </citation>
    <scope>NUCLEOTIDE SEQUENCE [GENOMIC DNA] OF 96-338</scope>
    <source>
        <strain>ATCC 14028s / SGSG 2262</strain>
    </source>
</reference>
<reference key="4">
    <citation type="journal article" date="1988" name="J. Bacteriol.">
        <title>Ethanolamine utilization in Salmonella typhimurium.</title>
        <authorList>
            <person name="Roof D.M."/>
            <person name="Roth J.R."/>
        </authorList>
    </citation>
    <scope>FUNCTION</scope>
    <scope>PATHWAY</scope>
    <scope>OPERON</scope>
    <scope>INDUCTION BY ETHANOLAMINE AND COBALAMIN</scope>
    <source>
        <strain>LT2</strain>
    </source>
</reference>
<reference key="5">
    <citation type="journal article" date="1989" name="J. Bacteriol.">
        <title>Functions required for vitamin B12-dependent ethanolamine utilization in Salmonella typhimurium.</title>
        <authorList>
            <person name="Roof D.M."/>
            <person name="Roth J.R."/>
        </authorList>
    </citation>
    <scope>FUNCTION</scope>
    <scope>DISRUPTION PHENOTYPE</scope>
    <source>
        <strain>LT2</strain>
    </source>
</reference>
<reference key="6">
    <citation type="journal article" date="2004" name="J. Bacteriol.">
        <title>The eutD gene of Salmonella enterica encodes a protein with phosphotransacetylase enzyme activity.</title>
        <authorList>
            <person name="Brinsmade S.R."/>
            <person name="Escalante-Semerena J.C."/>
        </authorList>
    </citation>
    <scope>FUNCTION</scope>
    <scope>CATALYTIC ACTIVITY</scope>
    <scope>BIOPHYSICOCHEMICAL PROPERTIES</scope>
    <source>
        <strain>LT2</strain>
    </source>
</reference>
<reference key="7">
    <citation type="journal article" date="2005" name="Microbiology">
        <title>Acetate excretion during growth of Salmonella enterica on ethanolamine requires phosphotransacetylase (EutD) activity, and acetate recapture requires acetyl-CoA synthetase (Acs) and phosphotransacetylase (Pta) activities.</title>
        <authorList>
            <person name="Starai V.J."/>
            <person name="Garrity J."/>
            <person name="Escalante-Semerena J.C."/>
        </authorList>
    </citation>
    <scope>FUNCTION</scope>
    <scope>DISRUPTION PHENOTYPE</scope>
    <source>
        <strain>LT2</strain>
    </source>
</reference>
<reference key="8">
    <citation type="journal article" date="2006" name="J. Bacteriol.">
        <title>Conserving a volatile metabolite: a role for carboxysome-like organelles in Salmonella enterica.</title>
        <authorList>
            <person name="Penrod J.T."/>
            <person name="Roth J.R."/>
        </authorList>
    </citation>
    <scope>FUNCTION</scope>
    <scope>DISRUPTION PHENOTYPE</scope>
    <source>
        <strain>LT2</strain>
    </source>
</reference>
<reference key="9">
    <citation type="journal article" date="2013" name="J. Bacteriol.">
        <title>Evidence that a metabolic microcompartment contains and recycles private cofactor pools.</title>
        <authorList>
            <person name="Huseby D.L."/>
            <person name="Roth J.R."/>
        </authorList>
    </citation>
    <scope>SUBCELLULAR LOCATION</scope>
    <scope>DISRUPTION PHENOTYPE</scope>
    <source>
        <strain>LT2</strain>
    </source>
</reference>
<reference key="10">
    <citation type="journal article" date="2018" name="Infect. Immun.">
        <title>The Ethanolamine Permease EutH Promotes Vacuole Adaptation of Salmonella enterica and Listeria monocytogenes during Macrophage Infection.</title>
        <authorList>
            <person name="Anderson C.J."/>
            <person name="Satkovich J."/>
            <person name="Koeseoglu V.K."/>
            <person name="Agaisse H."/>
            <person name="Kendall M.M."/>
        </authorList>
    </citation>
    <scope>FUNCTION</scope>
    <source>
        <strain>SL1344</strain>
    </source>
</reference>